<accession>A0PZF8</accession>
<gene>
    <name type="ordered locus">NT01CX_1681</name>
</gene>
<dbReference type="EMBL" id="CP000382">
    <property type="protein sequence ID" value="ABK61325.1"/>
    <property type="molecule type" value="Genomic_DNA"/>
</dbReference>
<dbReference type="RefSeq" id="WP_011721767.1">
    <property type="nucleotide sequence ID" value="NC_008593.1"/>
</dbReference>
<dbReference type="STRING" id="386415.NT01CX_1681"/>
<dbReference type="KEGG" id="cno:NT01CX_1681"/>
<dbReference type="eggNOG" id="COG4492">
    <property type="taxonomic scope" value="Bacteria"/>
</dbReference>
<dbReference type="HOGENOM" id="CLU_128147_0_0_9"/>
<dbReference type="Proteomes" id="UP000008220">
    <property type="component" value="Chromosome"/>
</dbReference>
<dbReference type="CDD" id="cd04888">
    <property type="entry name" value="ACT_PheB-BS"/>
    <property type="match status" value="1"/>
</dbReference>
<dbReference type="Gene3D" id="3.30.70.260">
    <property type="match status" value="1"/>
</dbReference>
<dbReference type="HAMAP" id="MF_00707">
    <property type="entry name" value="UPF0735"/>
    <property type="match status" value="1"/>
</dbReference>
<dbReference type="InterPro" id="IPR045865">
    <property type="entry name" value="ACT-like_dom_sf"/>
</dbReference>
<dbReference type="InterPro" id="IPR002912">
    <property type="entry name" value="ACT_dom"/>
</dbReference>
<dbReference type="InterPro" id="IPR008310">
    <property type="entry name" value="UPF0735_ACT_dom-cont"/>
</dbReference>
<dbReference type="NCBIfam" id="NF003361">
    <property type="entry name" value="PRK04435.1"/>
    <property type="match status" value="1"/>
</dbReference>
<dbReference type="PIRSF" id="PIRSF025624">
    <property type="entry name" value="ACT_PheB"/>
    <property type="match status" value="1"/>
</dbReference>
<dbReference type="SUPFAM" id="SSF55021">
    <property type="entry name" value="ACT-like"/>
    <property type="match status" value="1"/>
</dbReference>
<dbReference type="PROSITE" id="PS51671">
    <property type="entry name" value="ACT"/>
    <property type="match status" value="1"/>
</dbReference>
<protein>
    <recommendedName>
        <fullName evidence="1">UPF0735 ACT domain-containing protein NT01CX_1681</fullName>
    </recommendedName>
</protein>
<proteinExistence type="inferred from homology"/>
<reference key="1">
    <citation type="journal article" date="2006" name="Nat. Biotechnol.">
        <title>The genome and transcriptomes of the anti-tumor agent Clostridium novyi-NT.</title>
        <authorList>
            <person name="Bettegowda C."/>
            <person name="Huang X."/>
            <person name="Lin J."/>
            <person name="Cheong I."/>
            <person name="Kohli M."/>
            <person name="Szabo S.A."/>
            <person name="Zhang X."/>
            <person name="Diaz L.A. Jr."/>
            <person name="Velculescu V.E."/>
            <person name="Parmigiani G."/>
            <person name="Kinzler K.W."/>
            <person name="Vogelstein B."/>
            <person name="Zhou S."/>
        </authorList>
    </citation>
    <scope>NUCLEOTIDE SEQUENCE [LARGE SCALE GENOMIC DNA]</scope>
    <source>
        <strain>NT</strain>
    </source>
</reference>
<evidence type="ECO:0000255" key="1">
    <source>
        <dbReference type="HAMAP-Rule" id="MF_00707"/>
    </source>
</evidence>
<keyword id="KW-1185">Reference proteome</keyword>
<sequence length="144" mass="16136">MDKYLIINTKILPEVFGKVLQAKELLRTGKAKDITEASKIVGISRSSYYKYKDFVFSVLEGTHVQKATIGFLLSHKAGTLSRILDRIAQINGNILTINQDIPVNNAASVTITFDISNMVVELNEFLREMQEMDNVVKVSLIAME</sequence>
<name>Y1681_CLONN</name>
<organism>
    <name type="scientific">Clostridium novyi (strain NT)</name>
    <dbReference type="NCBI Taxonomy" id="386415"/>
    <lineage>
        <taxon>Bacteria</taxon>
        <taxon>Bacillati</taxon>
        <taxon>Bacillota</taxon>
        <taxon>Clostridia</taxon>
        <taxon>Eubacteriales</taxon>
        <taxon>Clostridiaceae</taxon>
        <taxon>Clostridium</taxon>
    </lineage>
</organism>
<comment type="similarity">
    <text evidence="1">Belongs to the UPF0735 family.</text>
</comment>
<feature type="chain" id="PRO_0000366306" description="UPF0735 ACT domain-containing protein NT01CX_1681">
    <location>
        <begin position="1"/>
        <end position="144"/>
    </location>
</feature>
<feature type="domain" description="ACT" evidence="1">
    <location>
        <begin position="68"/>
        <end position="143"/>
    </location>
</feature>